<organism>
    <name type="scientific">Rickettsia massiliae (strain Mtu5)</name>
    <dbReference type="NCBI Taxonomy" id="416276"/>
    <lineage>
        <taxon>Bacteria</taxon>
        <taxon>Pseudomonadati</taxon>
        <taxon>Pseudomonadota</taxon>
        <taxon>Alphaproteobacteria</taxon>
        <taxon>Rickettsiales</taxon>
        <taxon>Rickettsiaceae</taxon>
        <taxon>Rickettsieae</taxon>
        <taxon>Rickettsia</taxon>
        <taxon>spotted fever group</taxon>
    </lineage>
</organism>
<evidence type="ECO:0000255" key="1">
    <source>
        <dbReference type="HAMAP-Rule" id="MF_01331"/>
    </source>
</evidence>
<evidence type="ECO:0000305" key="2"/>
<gene>
    <name evidence="1" type="primary">rplV</name>
    <name type="ordered locus">RMA_1035</name>
</gene>
<comment type="function">
    <text evidence="1">This protein binds specifically to 23S rRNA; its binding is stimulated by other ribosomal proteins, e.g. L4, L17, and L20. It is important during the early stages of 50S assembly. It makes multiple contacts with different domains of the 23S rRNA in the assembled 50S subunit and ribosome (By similarity).</text>
</comment>
<comment type="function">
    <text evidence="1">The globular domain of the protein is located near the polypeptide exit tunnel on the outside of the subunit, while an extended beta-hairpin is found that lines the wall of the exit tunnel in the center of the 70S ribosome.</text>
</comment>
<comment type="subunit">
    <text evidence="1">Part of the 50S ribosomal subunit.</text>
</comment>
<comment type="similarity">
    <text evidence="1">Belongs to the universal ribosomal protein uL22 family.</text>
</comment>
<accession>A8F2E2</accession>
<reference key="1">
    <citation type="journal article" date="2007" name="Genome Res.">
        <title>Lateral gene transfer between obligate intracellular bacteria: evidence from the Rickettsia massiliae genome.</title>
        <authorList>
            <person name="Blanc G."/>
            <person name="Ogata H."/>
            <person name="Robert C."/>
            <person name="Audic S."/>
            <person name="Claverie J.-M."/>
            <person name="Raoult D."/>
        </authorList>
    </citation>
    <scope>NUCLEOTIDE SEQUENCE [LARGE SCALE GENOMIC DNA]</scope>
    <source>
        <strain>Mtu5</strain>
    </source>
</reference>
<keyword id="KW-0687">Ribonucleoprotein</keyword>
<keyword id="KW-0689">Ribosomal protein</keyword>
<keyword id="KW-0694">RNA-binding</keyword>
<keyword id="KW-0699">rRNA-binding</keyword>
<protein>
    <recommendedName>
        <fullName evidence="1">Large ribosomal subunit protein uL22</fullName>
    </recommendedName>
    <alternativeName>
        <fullName evidence="2">50S ribosomal protein L22</fullName>
    </alternativeName>
</protein>
<dbReference type="EMBL" id="CP000683">
    <property type="protein sequence ID" value="ABV85078.1"/>
    <property type="molecule type" value="Genomic_DNA"/>
</dbReference>
<dbReference type="SMR" id="A8F2E2"/>
<dbReference type="KEGG" id="rms:RMA_1035"/>
<dbReference type="HOGENOM" id="CLU_083987_3_0_5"/>
<dbReference type="Proteomes" id="UP000001311">
    <property type="component" value="Chromosome"/>
</dbReference>
<dbReference type="GO" id="GO:0022625">
    <property type="term" value="C:cytosolic large ribosomal subunit"/>
    <property type="evidence" value="ECO:0007669"/>
    <property type="project" value="TreeGrafter"/>
</dbReference>
<dbReference type="GO" id="GO:0019843">
    <property type="term" value="F:rRNA binding"/>
    <property type="evidence" value="ECO:0007669"/>
    <property type="project" value="UniProtKB-UniRule"/>
</dbReference>
<dbReference type="GO" id="GO:0003735">
    <property type="term" value="F:structural constituent of ribosome"/>
    <property type="evidence" value="ECO:0007669"/>
    <property type="project" value="InterPro"/>
</dbReference>
<dbReference type="GO" id="GO:0006412">
    <property type="term" value="P:translation"/>
    <property type="evidence" value="ECO:0007669"/>
    <property type="project" value="UniProtKB-UniRule"/>
</dbReference>
<dbReference type="CDD" id="cd00336">
    <property type="entry name" value="Ribosomal_L22"/>
    <property type="match status" value="1"/>
</dbReference>
<dbReference type="Gene3D" id="3.90.470.10">
    <property type="entry name" value="Ribosomal protein L22/L17"/>
    <property type="match status" value="1"/>
</dbReference>
<dbReference type="HAMAP" id="MF_01331_B">
    <property type="entry name" value="Ribosomal_uL22_B"/>
    <property type="match status" value="1"/>
</dbReference>
<dbReference type="InterPro" id="IPR001063">
    <property type="entry name" value="Ribosomal_uL22"/>
</dbReference>
<dbReference type="InterPro" id="IPR005727">
    <property type="entry name" value="Ribosomal_uL22_bac/chlpt-type"/>
</dbReference>
<dbReference type="InterPro" id="IPR047867">
    <property type="entry name" value="Ribosomal_uL22_bac/org-type"/>
</dbReference>
<dbReference type="InterPro" id="IPR018260">
    <property type="entry name" value="Ribosomal_uL22_CS"/>
</dbReference>
<dbReference type="InterPro" id="IPR036394">
    <property type="entry name" value="Ribosomal_uL22_sf"/>
</dbReference>
<dbReference type="NCBIfam" id="TIGR01044">
    <property type="entry name" value="rplV_bact"/>
    <property type="match status" value="1"/>
</dbReference>
<dbReference type="PANTHER" id="PTHR13501">
    <property type="entry name" value="CHLOROPLAST 50S RIBOSOMAL PROTEIN L22-RELATED"/>
    <property type="match status" value="1"/>
</dbReference>
<dbReference type="PANTHER" id="PTHR13501:SF8">
    <property type="entry name" value="LARGE RIBOSOMAL SUBUNIT PROTEIN UL22M"/>
    <property type="match status" value="1"/>
</dbReference>
<dbReference type="Pfam" id="PF00237">
    <property type="entry name" value="Ribosomal_L22"/>
    <property type="match status" value="1"/>
</dbReference>
<dbReference type="SUPFAM" id="SSF54843">
    <property type="entry name" value="Ribosomal protein L22"/>
    <property type="match status" value="1"/>
</dbReference>
<dbReference type="PROSITE" id="PS00464">
    <property type="entry name" value="RIBOSOMAL_L22"/>
    <property type="match status" value="1"/>
</dbReference>
<name>RL22_RICM5</name>
<feature type="chain" id="PRO_0000354513" description="Large ribosomal subunit protein uL22">
    <location>
        <begin position="1"/>
        <end position="121"/>
    </location>
</feature>
<proteinExistence type="inferred from homology"/>
<sequence>MYMVQENKNFATAQAKSIRVSSRKLNLVAAFIRNMKVSEALVQLTFSPKRIAKVVKDCLQSAVANAENNLGLDIDRLVITKATVGKALVMKRVMPRAKGRATRINKFFSNLYITVTEKEDN</sequence>